<keyword id="KW-0240">DNA-directed RNA polymerase</keyword>
<keyword id="KW-0548">Nucleotidyltransferase</keyword>
<keyword id="KW-0804">Transcription</keyword>
<keyword id="KW-0808">Transferase</keyword>
<name>RPOZ_STRPQ</name>
<organism>
    <name type="scientific">Streptococcus pyogenes serotype M3 (strain SSI-1)</name>
    <dbReference type="NCBI Taxonomy" id="193567"/>
    <lineage>
        <taxon>Bacteria</taxon>
        <taxon>Bacillati</taxon>
        <taxon>Bacillota</taxon>
        <taxon>Bacilli</taxon>
        <taxon>Lactobacillales</taxon>
        <taxon>Streptococcaceae</taxon>
        <taxon>Streptococcus</taxon>
    </lineage>
</organism>
<proteinExistence type="inferred from homology"/>
<protein>
    <recommendedName>
        <fullName>DNA-directed RNA polymerase subunit omega</fullName>
        <shortName>RNAP omega subunit</shortName>
        <ecNumber>2.7.7.6</ecNumber>
    </recommendedName>
    <alternativeName>
        <fullName>RNA polymerase omega subunit</fullName>
    </alternativeName>
    <alternativeName>
        <fullName>Transcriptase subunit omega</fullName>
    </alternativeName>
</protein>
<accession>P0DF37</accession>
<accession>P68841</accession>
<accession>P82577</accession>
<feature type="chain" id="PRO_0000411558" description="DNA-directed RNA polymerase subunit omega">
    <location>
        <begin position="1"/>
        <end position="104"/>
    </location>
</feature>
<dbReference type="EC" id="2.7.7.6"/>
<dbReference type="EMBL" id="BA000034">
    <property type="protein sequence ID" value="BAC63583.1"/>
    <property type="status" value="ALT_INIT"/>
    <property type="molecule type" value="Genomic_DNA"/>
</dbReference>
<dbReference type="SMR" id="P0DF37"/>
<dbReference type="KEGG" id="sps:SPs0488"/>
<dbReference type="HOGENOM" id="CLU_125406_0_0_9"/>
<dbReference type="GO" id="GO:0000428">
    <property type="term" value="C:DNA-directed RNA polymerase complex"/>
    <property type="evidence" value="ECO:0007669"/>
    <property type="project" value="UniProtKB-KW"/>
</dbReference>
<dbReference type="GO" id="GO:0003677">
    <property type="term" value="F:DNA binding"/>
    <property type="evidence" value="ECO:0007669"/>
    <property type="project" value="UniProtKB-UniRule"/>
</dbReference>
<dbReference type="GO" id="GO:0003899">
    <property type="term" value="F:DNA-directed RNA polymerase activity"/>
    <property type="evidence" value="ECO:0007669"/>
    <property type="project" value="UniProtKB-UniRule"/>
</dbReference>
<dbReference type="GO" id="GO:0006351">
    <property type="term" value="P:DNA-templated transcription"/>
    <property type="evidence" value="ECO:0007669"/>
    <property type="project" value="UniProtKB-UniRule"/>
</dbReference>
<dbReference type="Gene3D" id="3.90.940.10">
    <property type="match status" value="1"/>
</dbReference>
<dbReference type="HAMAP" id="MF_00366">
    <property type="entry name" value="RNApol_bact_RpoZ"/>
    <property type="match status" value="1"/>
</dbReference>
<dbReference type="InterPro" id="IPR003716">
    <property type="entry name" value="DNA-dir_RNA_pol_omega"/>
</dbReference>
<dbReference type="InterPro" id="IPR006110">
    <property type="entry name" value="Pol_omega/Rpo6/RPB6"/>
</dbReference>
<dbReference type="InterPro" id="IPR036161">
    <property type="entry name" value="RPB6/omega-like_sf"/>
</dbReference>
<dbReference type="NCBIfam" id="TIGR00690">
    <property type="entry name" value="rpoZ"/>
    <property type="match status" value="1"/>
</dbReference>
<dbReference type="PANTHER" id="PTHR34476">
    <property type="entry name" value="DNA-DIRECTED RNA POLYMERASE SUBUNIT OMEGA"/>
    <property type="match status" value="1"/>
</dbReference>
<dbReference type="PANTHER" id="PTHR34476:SF1">
    <property type="entry name" value="DNA-DIRECTED RNA POLYMERASE SUBUNIT OMEGA"/>
    <property type="match status" value="1"/>
</dbReference>
<dbReference type="Pfam" id="PF01192">
    <property type="entry name" value="RNA_pol_Rpb6"/>
    <property type="match status" value="1"/>
</dbReference>
<dbReference type="SMART" id="SM01409">
    <property type="entry name" value="RNA_pol_Rpb6"/>
    <property type="match status" value="1"/>
</dbReference>
<dbReference type="SUPFAM" id="SSF63562">
    <property type="entry name" value="RPB6/omega subunit-like"/>
    <property type="match status" value="1"/>
</dbReference>
<sequence>MLKPSIDTLLDKVPSKYSLVILQAKRAHELEAGATPTQEFKSVKSTLQALEEIESGNVVIHPDPSAKREAVRAKIEAERLAKEEEERKIKEQIAKEKEEEGEKI</sequence>
<comment type="function">
    <text evidence="1">Promotes RNA polymerase assembly. Latches the N- and C-terminal regions of the beta' subunit thereby facilitating its interaction with the beta and alpha subunits (By similarity).</text>
</comment>
<comment type="catalytic activity">
    <reaction>
        <text>RNA(n) + a ribonucleoside 5'-triphosphate = RNA(n+1) + diphosphate</text>
        <dbReference type="Rhea" id="RHEA:21248"/>
        <dbReference type="Rhea" id="RHEA-COMP:14527"/>
        <dbReference type="Rhea" id="RHEA-COMP:17342"/>
        <dbReference type="ChEBI" id="CHEBI:33019"/>
        <dbReference type="ChEBI" id="CHEBI:61557"/>
        <dbReference type="ChEBI" id="CHEBI:140395"/>
        <dbReference type="EC" id="2.7.7.6"/>
    </reaction>
</comment>
<comment type="subunit">
    <text evidence="1">The RNAP catalytic core consists of 2 alpha, 1 beta, 1 beta' and 1 omega subunit. When a sigma factor is associated with the core the holoenzyme is formed, which can initiate transcription (By similarity).</text>
</comment>
<comment type="similarity">
    <text evidence="2">Belongs to the RNA polymerase subunit omega family.</text>
</comment>
<comment type="sequence caution" evidence="2">
    <conflict type="erroneous initiation">
        <sequence resource="EMBL-CDS" id="BAC63583"/>
    </conflict>
</comment>
<evidence type="ECO:0000250" key="1"/>
<evidence type="ECO:0000305" key="2"/>
<reference key="1">
    <citation type="journal article" date="2003" name="Genome Res.">
        <title>Genome sequence of an M3 strain of Streptococcus pyogenes reveals a large-scale genomic rearrangement in invasive strains and new insights into phage evolution.</title>
        <authorList>
            <person name="Nakagawa I."/>
            <person name="Kurokawa K."/>
            <person name="Yamashita A."/>
            <person name="Nakata M."/>
            <person name="Tomiyasu Y."/>
            <person name="Okahashi N."/>
            <person name="Kawabata S."/>
            <person name="Yamazaki K."/>
            <person name="Shiba T."/>
            <person name="Yasunaga T."/>
            <person name="Hayashi H."/>
            <person name="Hattori M."/>
            <person name="Hamada S."/>
        </authorList>
    </citation>
    <scope>NUCLEOTIDE SEQUENCE [LARGE SCALE GENOMIC DNA]</scope>
    <source>
        <strain>SSI-1</strain>
    </source>
</reference>
<gene>
    <name type="primary">rpoZ</name>
    <name type="ordered locus">SPs0488</name>
</gene>